<name>PDXH_MYCBO</name>
<protein>
    <recommendedName>
        <fullName evidence="1">Pyridoxine/pyridoxamine 5'-phosphate oxidase</fullName>
        <ecNumber evidence="1">1.4.3.5</ecNumber>
    </recommendedName>
    <alternativeName>
        <fullName evidence="1">PNP/PMP oxidase</fullName>
        <shortName evidence="1">PNPOx</shortName>
    </alternativeName>
    <alternativeName>
        <fullName evidence="1">Pyridoxal 5'-phosphate synthase</fullName>
    </alternativeName>
</protein>
<feature type="chain" id="PRO_0000167720" description="Pyridoxine/pyridoxamine 5'-phosphate oxidase">
    <location>
        <begin position="1"/>
        <end position="224"/>
    </location>
</feature>
<feature type="binding site" evidence="1">
    <location>
        <begin position="19"/>
        <end position="22"/>
    </location>
    <ligand>
        <name>substrate</name>
    </ligand>
</feature>
<feature type="binding site" evidence="1">
    <location>
        <begin position="76"/>
        <end position="81"/>
    </location>
    <ligand>
        <name>FMN</name>
        <dbReference type="ChEBI" id="CHEBI:58210"/>
    </ligand>
</feature>
<feature type="binding site" evidence="1">
    <location>
        <position position="81"/>
    </location>
    <ligand>
        <name>substrate</name>
    </ligand>
</feature>
<feature type="binding site" evidence="1">
    <location>
        <begin position="91"/>
        <end position="92"/>
    </location>
    <ligand>
        <name>FMN</name>
        <dbReference type="ChEBI" id="CHEBI:58210"/>
    </ligand>
</feature>
<feature type="binding site" evidence="1">
    <location>
        <position position="98"/>
    </location>
    <ligand>
        <name>FMN</name>
        <dbReference type="ChEBI" id="CHEBI:58210"/>
    </ligand>
</feature>
<feature type="binding site" evidence="1">
    <location>
        <position position="120"/>
    </location>
    <ligand>
        <name>FMN</name>
        <dbReference type="ChEBI" id="CHEBI:58210"/>
    </ligand>
</feature>
<feature type="binding site" evidence="1">
    <location>
        <position position="138"/>
    </location>
    <ligand>
        <name>substrate</name>
    </ligand>
</feature>
<feature type="binding site" evidence="1">
    <location>
        <position position="142"/>
    </location>
    <ligand>
        <name>substrate</name>
    </ligand>
</feature>
<feature type="binding site" evidence="1">
    <location>
        <begin position="155"/>
        <end position="156"/>
    </location>
    <ligand>
        <name>FMN</name>
        <dbReference type="ChEBI" id="CHEBI:58210"/>
    </ligand>
</feature>
<feature type="binding site" evidence="1">
    <location>
        <position position="201"/>
    </location>
    <ligand>
        <name>FMN</name>
        <dbReference type="ChEBI" id="CHEBI:58210"/>
    </ligand>
</feature>
<feature type="binding site" evidence="1">
    <location>
        <begin position="207"/>
        <end position="209"/>
    </location>
    <ligand>
        <name>substrate</name>
    </ligand>
</feature>
<feature type="binding site" evidence="1">
    <location>
        <position position="211"/>
    </location>
    <ligand>
        <name>FMN</name>
        <dbReference type="ChEBI" id="CHEBI:58210"/>
    </ligand>
</feature>
<comment type="function">
    <text evidence="1">Catalyzes the oxidation of either pyridoxine 5'-phosphate (PNP) or pyridoxamine 5'-phosphate (PMP) into pyridoxal 5'-phosphate (PLP).</text>
</comment>
<comment type="catalytic activity">
    <reaction evidence="1">
        <text>pyridoxamine 5'-phosphate + O2 + H2O = pyridoxal 5'-phosphate + H2O2 + NH4(+)</text>
        <dbReference type="Rhea" id="RHEA:15817"/>
        <dbReference type="ChEBI" id="CHEBI:15377"/>
        <dbReference type="ChEBI" id="CHEBI:15379"/>
        <dbReference type="ChEBI" id="CHEBI:16240"/>
        <dbReference type="ChEBI" id="CHEBI:28938"/>
        <dbReference type="ChEBI" id="CHEBI:58451"/>
        <dbReference type="ChEBI" id="CHEBI:597326"/>
        <dbReference type="EC" id="1.4.3.5"/>
    </reaction>
</comment>
<comment type="catalytic activity">
    <reaction evidence="1">
        <text>pyridoxine 5'-phosphate + O2 = pyridoxal 5'-phosphate + H2O2</text>
        <dbReference type="Rhea" id="RHEA:15149"/>
        <dbReference type="ChEBI" id="CHEBI:15379"/>
        <dbReference type="ChEBI" id="CHEBI:16240"/>
        <dbReference type="ChEBI" id="CHEBI:58589"/>
        <dbReference type="ChEBI" id="CHEBI:597326"/>
        <dbReference type="EC" id="1.4.3.5"/>
    </reaction>
</comment>
<comment type="cofactor">
    <cofactor evidence="1">
        <name>FMN</name>
        <dbReference type="ChEBI" id="CHEBI:58210"/>
    </cofactor>
    <text evidence="1">Binds 1 FMN per subunit.</text>
</comment>
<comment type="pathway">
    <text evidence="1">Cofactor metabolism; pyridoxal 5'-phosphate salvage; pyridoxal 5'-phosphate from pyridoxamine 5'-phosphate: step 1/1.</text>
</comment>
<comment type="pathway">
    <text evidence="1">Cofactor metabolism; pyridoxal 5'-phosphate salvage; pyridoxal 5'-phosphate from pyridoxine 5'-phosphate: step 1/1.</text>
</comment>
<comment type="subunit">
    <text evidence="1">Homodimer.</text>
</comment>
<comment type="similarity">
    <text evidence="1">Belongs to the pyridoxamine 5'-phosphate oxidase family.</text>
</comment>
<keyword id="KW-0285">Flavoprotein</keyword>
<keyword id="KW-0288">FMN</keyword>
<keyword id="KW-0560">Oxidoreductase</keyword>
<keyword id="KW-0664">Pyridoxine biosynthesis</keyword>
<keyword id="KW-1185">Reference proteome</keyword>
<gene>
    <name evidence="1" type="primary">pdxH</name>
    <name type="ordered locus">BQ2027_MB2639</name>
</gene>
<proteinExistence type="inferred from homology"/>
<dbReference type="EC" id="1.4.3.5" evidence="1"/>
<dbReference type="EMBL" id="LT708304">
    <property type="protein sequence ID" value="SIU01257.1"/>
    <property type="molecule type" value="Genomic_DNA"/>
</dbReference>
<dbReference type="RefSeq" id="NP_856285.1">
    <property type="nucleotide sequence ID" value="NC_002945.3"/>
</dbReference>
<dbReference type="RefSeq" id="WP_003413471.1">
    <property type="nucleotide sequence ID" value="NC_002945.4"/>
</dbReference>
<dbReference type="SMR" id="P65683"/>
<dbReference type="GeneID" id="45426610"/>
<dbReference type="KEGG" id="mbo:BQ2027_MB2639"/>
<dbReference type="PATRIC" id="fig|233413.5.peg.2900"/>
<dbReference type="UniPathway" id="UPA01068">
    <property type="reaction ID" value="UER00304"/>
</dbReference>
<dbReference type="UniPathway" id="UPA01068">
    <property type="reaction ID" value="UER00305"/>
</dbReference>
<dbReference type="Proteomes" id="UP000001419">
    <property type="component" value="Chromosome"/>
</dbReference>
<dbReference type="GO" id="GO:0010181">
    <property type="term" value="F:FMN binding"/>
    <property type="evidence" value="ECO:0007669"/>
    <property type="project" value="UniProtKB-UniRule"/>
</dbReference>
<dbReference type="GO" id="GO:0004733">
    <property type="term" value="F:pyridoxamine phosphate oxidase activity"/>
    <property type="evidence" value="ECO:0007669"/>
    <property type="project" value="UniProtKB-UniRule"/>
</dbReference>
<dbReference type="GO" id="GO:0008615">
    <property type="term" value="P:pyridoxine biosynthetic process"/>
    <property type="evidence" value="ECO:0007669"/>
    <property type="project" value="UniProtKB-KW"/>
</dbReference>
<dbReference type="FunFam" id="2.30.110.10:FF:000021">
    <property type="entry name" value="Pyridoxine 5'-phosphate oxidase"/>
    <property type="match status" value="1"/>
</dbReference>
<dbReference type="Gene3D" id="2.30.110.10">
    <property type="entry name" value="Electron Transport, Fmn-binding Protein, Chain A"/>
    <property type="match status" value="1"/>
</dbReference>
<dbReference type="HAMAP" id="MF_01629">
    <property type="entry name" value="PdxH"/>
    <property type="match status" value="1"/>
</dbReference>
<dbReference type="InterPro" id="IPR000659">
    <property type="entry name" value="Pyridox_Oxase"/>
</dbReference>
<dbReference type="InterPro" id="IPR019740">
    <property type="entry name" value="Pyridox_Oxase_CS"/>
</dbReference>
<dbReference type="InterPro" id="IPR011576">
    <property type="entry name" value="Pyridox_Oxase_N"/>
</dbReference>
<dbReference type="InterPro" id="IPR019576">
    <property type="entry name" value="Pyridoxamine_oxidase_dimer_C"/>
</dbReference>
<dbReference type="InterPro" id="IPR012349">
    <property type="entry name" value="Split_barrel_FMN-bd"/>
</dbReference>
<dbReference type="NCBIfam" id="TIGR00558">
    <property type="entry name" value="pdxH"/>
    <property type="match status" value="1"/>
</dbReference>
<dbReference type="NCBIfam" id="NF004231">
    <property type="entry name" value="PRK05679.1"/>
    <property type="match status" value="1"/>
</dbReference>
<dbReference type="PANTHER" id="PTHR10851:SF0">
    <property type="entry name" value="PYRIDOXINE-5'-PHOSPHATE OXIDASE"/>
    <property type="match status" value="1"/>
</dbReference>
<dbReference type="PANTHER" id="PTHR10851">
    <property type="entry name" value="PYRIDOXINE-5-PHOSPHATE OXIDASE"/>
    <property type="match status" value="1"/>
</dbReference>
<dbReference type="Pfam" id="PF10590">
    <property type="entry name" value="PNP_phzG_C"/>
    <property type="match status" value="1"/>
</dbReference>
<dbReference type="Pfam" id="PF01243">
    <property type="entry name" value="PNPOx_N"/>
    <property type="match status" value="1"/>
</dbReference>
<dbReference type="PIRSF" id="PIRSF000190">
    <property type="entry name" value="Pyd_amn-ph_oxd"/>
    <property type="match status" value="1"/>
</dbReference>
<dbReference type="SUPFAM" id="SSF50475">
    <property type="entry name" value="FMN-binding split barrel"/>
    <property type="match status" value="1"/>
</dbReference>
<dbReference type="PROSITE" id="PS01064">
    <property type="entry name" value="PYRIDOX_OXIDASE"/>
    <property type="match status" value="1"/>
</dbReference>
<sequence>MDDDAQMVAIDKDQLARMRGEYGPEKDGCGDLDFDWLDDGWLTLLRRWLNDAQRAGVSEPNAMVLATVADGKPVTRSVLCKILDESGVAFFTSYTSAKGEQLAVTPYASATFPWYQLGRQAHVQGPVSKVSTEEIFTYWSMRPRGAQLGAWASQQSRPVGSRAQLDNQLAEVTRRFADQDQIPVPPGWGGYRIAPEIVEFWQGRENRMHNRIRVANGRLERLQP</sequence>
<accession>P65683</accession>
<accession>A0A1R3Y1Y0</accession>
<accession>O06207</accession>
<accession>X2BLE9</accession>
<reference key="1">
    <citation type="journal article" date="2003" name="Proc. Natl. Acad. Sci. U.S.A.">
        <title>The complete genome sequence of Mycobacterium bovis.</title>
        <authorList>
            <person name="Garnier T."/>
            <person name="Eiglmeier K."/>
            <person name="Camus J.-C."/>
            <person name="Medina N."/>
            <person name="Mansoor H."/>
            <person name="Pryor M."/>
            <person name="Duthoy S."/>
            <person name="Grondin S."/>
            <person name="Lacroix C."/>
            <person name="Monsempe C."/>
            <person name="Simon S."/>
            <person name="Harris B."/>
            <person name="Atkin R."/>
            <person name="Doggett J."/>
            <person name="Mayes R."/>
            <person name="Keating L."/>
            <person name="Wheeler P.R."/>
            <person name="Parkhill J."/>
            <person name="Barrell B.G."/>
            <person name="Cole S.T."/>
            <person name="Gordon S.V."/>
            <person name="Hewinson R.G."/>
        </authorList>
    </citation>
    <scope>NUCLEOTIDE SEQUENCE [LARGE SCALE GENOMIC DNA]</scope>
    <source>
        <strain>ATCC BAA-935 / AF2122/97</strain>
    </source>
</reference>
<reference key="2">
    <citation type="journal article" date="2017" name="Genome Announc.">
        <title>Updated reference genome sequence and annotation of Mycobacterium bovis AF2122/97.</title>
        <authorList>
            <person name="Malone K.M."/>
            <person name="Farrell D."/>
            <person name="Stuber T.P."/>
            <person name="Schubert O.T."/>
            <person name="Aebersold R."/>
            <person name="Robbe-Austerman S."/>
            <person name="Gordon S.V."/>
        </authorList>
    </citation>
    <scope>NUCLEOTIDE SEQUENCE [LARGE SCALE GENOMIC DNA]</scope>
    <scope>GENOME REANNOTATION</scope>
    <source>
        <strain>ATCC BAA-935 / AF2122/97</strain>
    </source>
</reference>
<evidence type="ECO:0000255" key="1">
    <source>
        <dbReference type="HAMAP-Rule" id="MF_01629"/>
    </source>
</evidence>
<organism>
    <name type="scientific">Mycobacterium bovis (strain ATCC BAA-935 / AF2122/97)</name>
    <dbReference type="NCBI Taxonomy" id="233413"/>
    <lineage>
        <taxon>Bacteria</taxon>
        <taxon>Bacillati</taxon>
        <taxon>Actinomycetota</taxon>
        <taxon>Actinomycetes</taxon>
        <taxon>Mycobacteriales</taxon>
        <taxon>Mycobacteriaceae</taxon>
        <taxon>Mycobacterium</taxon>
        <taxon>Mycobacterium tuberculosis complex</taxon>
    </lineage>
</organism>